<keyword id="KW-0034">Amyloid</keyword>
<keyword id="KW-1003">Cell membrane</keyword>
<keyword id="KW-0186">Copper</keyword>
<keyword id="KW-1015">Disulfide bond</keyword>
<keyword id="KW-0325">Glycoprotein</keyword>
<keyword id="KW-0333">Golgi apparatus</keyword>
<keyword id="KW-0336">GPI-anchor</keyword>
<keyword id="KW-0449">Lipoprotein</keyword>
<keyword id="KW-0472">Membrane</keyword>
<keyword id="KW-0479">Metal-binding</keyword>
<keyword id="KW-0640">Prion</keyword>
<keyword id="KW-0677">Repeat</keyword>
<keyword id="KW-0732">Signal</keyword>
<keyword id="KW-0862">Zinc</keyword>
<evidence type="ECO:0000250" key="1">
    <source>
        <dbReference type="UniProtKB" id="P04156"/>
    </source>
</evidence>
<evidence type="ECO:0000250" key="2">
    <source>
        <dbReference type="UniProtKB" id="P04273"/>
    </source>
</evidence>
<evidence type="ECO:0000250" key="3">
    <source>
        <dbReference type="UniProtKB" id="P04925"/>
    </source>
</evidence>
<evidence type="ECO:0000255" key="4"/>
<evidence type="ECO:0000256" key="5">
    <source>
        <dbReference type="SAM" id="MobiDB-lite"/>
    </source>
</evidence>
<evidence type="ECO:0000305" key="6"/>
<accession>P40242</accession>
<comment type="function">
    <text evidence="1 3">Its primary physiological function is unclear. Has cytoprotective activity against internal or environmental stresses. May play a role in neuronal development and synaptic plasticity. May be required for neuronal myelin sheath maintenance. May play a role in iron uptake and iron homeostasis. Soluble oligomers are toxic to cultured neuroblastoma cells and induce apoptosis (in vitro). Association with GPC1 (via its heparan sulfate chains) targets PRNP to lipid rafts. Also provides Cu(2+) or Zn(2+) for the ascorbate-mediated GPC1 deaminase degradation of its heparan sulfate side chains (By similarity).</text>
</comment>
<comment type="subunit">
    <text evidence="1 3">Monomer and homodimer. Has a tendency to aggregate into amyloid fibrils containing a cross-beta spine, formed by a steric zipper of superposed beta-strands. Soluble oligomers may represent an intermediate stage on the path to fibril formation. Copper binding may promote oligomerization. Interacts with GRB2, APP, ERI3/PRNPIP and SYN1. Mislocalized cytosolically exposed PrP interacts with MGRN1; this interaction alters MGRN1 subcellular location and causes lysosomal enlargement. Interacts with KIAA1191.</text>
</comment>
<comment type="subcellular location">
    <subcellularLocation>
        <location evidence="1">Cell membrane</location>
        <topology evidence="1">Lipid-anchor</topology>
        <topology evidence="1">GPI-anchor</topology>
    </subcellularLocation>
    <subcellularLocation>
        <location evidence="3">Golgi apparatus</location>
    </subcellularLocation>
    <text evidence="1">Targeted to lipid rafts via association with the heparan sulfate chains of GPC1. Colocates, in the presence of Cu(2+), to vesicles in para- and perinuclear regions, where both proteins undergo internalization. Heparin displaces PRNP from lipid rafts and promotes endocytosis.</text>
</comment>
<comment type="domain">
    <text evidence="1">The normal, monomeric form has a mainly alpha-helical structure. The disease-associated, protease-resistant form forms amyloid fibrils containing a cross-beta spine, formed by a steric zipper of superposed beta-strands. Disease mutations may favor intermolecular contacts via short beta strands, and may thereby trigger oligomerization.</text>
</comment>
<comment type="domain">
    <text evidence="1">Contains an N-terminal region composed of octamer repeats. At low copper concentrations, the sidechains of His residues from three or four repeats contribute to the binding of a single copper ion. Alternatively, a copper ion can be bound by interaction with the sidechain and backbone amide nitrogen of a single His residue. The observed copper binding stoichiometry suggests that two repeat regions cooperate to stabilize the binding of a single copper ion. At higher copper concentrations, each octamer can bind one copper ion by interactions with the His sidechain and Gly backbone atoms. A mixture of binding types may occur, especially in the case of octamer repeat expansion. Copper binding may stabilize the conformation of this region and may promote oligomerization.</text>
</comment>
<comment type="disease">
    <text evidence="6">Variations in PRNP are responsible of transmissible bovine spongiform encephalopathies (BSE), a class of neurodegenerative diseases that affect various mammals. These diseases are caused by abnormally folded prion proteins. BSE can be subdivided into at least three groups: classical, H-type and L-type, with the latter 2 collectively referred to as atypical BSE. Susceptibility or resistance to a BSE disease can be influenced by at least 3 factors related to the host prion protein: protein expression levels, number of octapeptide repeats, and specific polymorphisms. In cattle, as in humans, BSEs can occur as infectious, spontaneous and genetic diseases.</text>
</comment>
<comment type="similarity">
    <text evidence="6">Belongs to the prion family.</text>
</comment>
<sequence length="264" mass="28644">MVKSHIGSWILVLFVAMWSDVALCKKRPKPGGGWNTGGSRYPGQGSPGGNRYPSQGGGGWGQPHGGGWGQPHGGGWGQPHGGGWGQPHGGGWGQPHGGGGWGQGGTHGQWNKPSKPKTNMKHVAGAAAAGAVVGGLGGYMLGSAMSRPLIHFGSDYEDRYYRENMYRYPNQVYYRPVDQYSNQNNFVHDCVNITVKQHTVTTTTKGENFTETDIKMMERVVEQMCITQYQRESEAYYQRGASVILFSSPPVILLISFLIFLIVG</sequence>
<organism>
    <name type="scientific">Tragelaphus strepsiceros</name>
    <name type="common">Greater kudu</name>
    <dbReference type="NCBI Taxonomy" id="9946"/>
    <lineage>
        <taxon>Eukaryota</taxon>
        <taxon>Metazoa</taxon>
        <taxon>Chordata</taxon>
        <taxon>Craniata</taxon>
        <taxon>Vertebrata</taxon>
        <taxon>Euteleostomi</taxon>
        <taxon>Mammalia</taxon>
        <taxon>Eutheria</taxon>
        <taxon>Laurasiatheria</taxon>
        <taxon>Artiodactyla</taxon>
        <taxon>Ruminantia</taxon>
        <taxon>Pecora</taxon>
        <taxon>Bovidae</taxon>
        <taxon>Bovinae</taxon>
        <taxon>Tragelaphus</taxon>
    </lineage>
</organism>
<proteinExistence type="inferred from homology"/>
<feature type="signal peptide" evidence="4">
    <location>
        <begin position="1"/>
        <end position="24"/>
    </location>
</feature>
<feature type="chain" id="PRO_0000025735" description="Major prion protein 1">
    <location>
        <begin position="25"/>
        <end position="241"/>
    </location>
</feature>
<feature type="propeptide" id="PRO_0000025736" description="Removed in mature form" evidence="4">
    <location>
        <begin position="242"/>
        <end position="264"/>
    </location>
</feature>
<feature type="repeat" description="1">
    <location>
        <begin position="54"/>
        <end position="62"/>
    </location>
</feature>
<feature type="repeat" description="2">
    <location>
        <begin position="63"/>
        <end position="70"/>
    </location>
</feature>
<feature type="repeat" description="3">
    <location>
        <begin position="71"/>
        <end position="78"/>
    </location>
</feature>
<feature type="repeat" description="4">
    <location>
        <begin position="79"/>
        <end position="86"/>
    </location>
</feature>
<feature type="repeat" description="5">
    <location>
        <begin position="87"/>
        <end position="94"/>
    </location>
</feature>
<feature type="repeat" description="6">
    <location>
        <begin position="95"/>
        <end position="103"/>
    </location>
</feature>
<feature type="region of interest" description="Interaction with GRB2, ERI3 and SYN1" evidence="3">
    <location>
        <begin position="25"/>
        <end position="241"/>
    </location>
</feature>
<feature type="region of interest" description="Disordered" evidence="5">
    <location>
        <begin position="28"/>
        <end position="118"/>
    </location>
</feature>
<feature type="region of interest" description="6 X 8 AA tandem repeats of P-H-G-G-G-W-G-Q">
    <location>
        <begin position="54"/>
        <end position="103"/>
    </location>
</feature>
<feature type="compositionally biased region" description="Gly residues" evidence="5">
    <location>
        <begin position="55"/>
        <end position="107"/>
    </location>
</feature>
<feature type="binding site" evidence="1">
    <location>
        <position position="72"/>
    </location>
    <ligand>
        <name>Cu(2+)</name>
        <dbReference type="ChEBI" id="CHEBI:29036"/>
        <label>1</label>
    </ligand>
</feature>
<feature type="binding site" evidence="1">
    <location>
        <position position="73"/>
    </location>
    <ligand>
        <name>Cu(2+)</name>
        <dbReference type="ChEBI" id="CHEBI:29036"/>
        <label>1</label>
    </ligand>
</feature>
<feature type="binding site" evidence="1">
    <location>
        <position position="74"/>
    </location>
    <ligand>
        <name>Cu(2+)</name>
        <dbReference type="ChEBI" id="CHEBI:29036"/>
        <label>1</label>
    </ligand>
</feature>
<feature type="binding site" evidence="1">
    <location>
        <position position="80"/>
    </location>
    <ligand>
        <name>Cu(2+)</name>
        <dbReference type="ChEBI" id="CHEBI:29036"/>
        <label>2</label>
    </ligand>
</feature>
<feature type="binding site" evidence="1">
    <location>
        <position position="81"/>
    </location>
    <ligand>
        <name>Cu(2+)</name>
        <dbReference type="ChEBI" id="CHEBI:29036"/>
        <label>2</label>
    </ligand>
</feature>
<feature type="binding site" evidence="1">
    <location>
        <position position="82"/>
    </location>
    <ligand>
        <name>Cu(2+)</name>
        <dbReference type="ChEBI" id="CHEBI:29036"/>
        <label>2</label>
    </ligand>
</feature>
<feature type="binding site" evidence="1">
    <location>
        <position position="88"/>
    </location>
    <ligand>
        <name>Cu(2+)</name>
        <dbReference type="ChEBI" id="CHEBI:29036"/>
        <label>3</label>
    </ligand>
</feature>
<feature type="binding site" evidence="1">
    <location>
        <position position="89"/>
    </location>
    <ligand>
        <name>Cu(2+)</name>
        <dbReference type="ChEBI" id="CHEBI:29036"/>
        <label>3</label>
    </ligand>
</feature>
<feature type="binding site" evidence="1">
    <location>
        <position position="90"/>
    </location>
    <ligand>
        <name>Cu(2+)</name>
        <dbReference type="ChEBI" id="CHEBI:29036"/>
        <label>3</label>
    </ligand>
</feature>
<feature type="binding site" evidence="1">
    <location>
        <position position="96"/>
    </location>
    <ligand>
        <name>Cu(2+)</name>
        <dbReference type="ChEBI" id="CHEBI:29036"/>
        <label>4</label>
    </ligand>
</feature>
<feature type="binding site" evidence="1">
    <location>
        <position position="98"/>
    </location>
    <ligand>
        <name>Cu(2+)</name>
        <dbReference type="ChEBI" id="CHEBI:29036"/>
        <label>4</label>
    </ligand>
</feature>
<feature type="binding site" evidence="1">
    <location>
        <position position="99"/>
    </location>
    <ligand>
        <name>Cu(2+)</name>
        <dbReference type="ChEBI" id="CHEBI:29036"/>
        <label>4</label>
    </ligand>
</feature>
<feature type="lipid moiety-binding region" description="GPI-anchor amidated alanine" evidence="4">
    <location>
        <position position="241"/>
    </location>
</feature>
<feature type="glycosylation site" description="N-linked (GlcNAc...) asparagine" evidence="4">
    <location>
        <position position="192"/>
    </location>
</feature>
<feature type="glycosylation site" description="N-linked (GlcNAc...) asparagine" evidence="4">
    <location>
        <position position="208"/>
    </location>
</feature>
<feature type="disulfide bond" evidence="2">
    <location>
        <begin position="190"/>
        <end position="225"/>
    </location>
</feature>
<protein>
    <recommendedName>
        <fullName>Major prion protein 1</fullName>
        <shortName>PrP</shortName>
    </recommendedName>
    <alternativeName>
        <fullName>Major scrapie-associated fibril protein 1</fullName>
    </alternativeName>
    <cdAntigenName>CD230</cdAntigenName>
</protein>
<dbReference type="EMBL" id="X74771">
    <property type="protein sequence ID" value="CAA52781.1"/>
    <property type="molecule type" value="Genomic_DNA"/>
</dbReference>
<dbReference type="PIR" id="S37137">
    <property type="entry name" value="S37137"/>
</dbReference>
<dbReference type="BMRB" id="P40242"/>
<dbReference type="SMR" id="P40242"/>
<dbReference type="GO" id="GO:0005794">
    <property type="term" value="C:Golgi apparatus"/>
    <property type="evidence" value="ECO:0007669"/>
    <property type="project" value="UniProtKB-SubCell"/>
</dbReference>
<dbReference type="GO" id="GO:0005886">
    <property type="term" value="C:plasma membrane"/>
    <property type="evidence" value="ECO:0007669"/>
    <property type="project" value="UniProtKB-SubCell"/>
</dbReference>
<dbReference type="GO" id="GO:0098552">
    <property type="term" value="C:side of membrane"/>
    <property type="evidence" value="ECO:0007669"/>
    <property type="project" value="UniProtKB-KW"/>
</dbReference>
<dbReference type="GO" id="GO:0005507">
    <property type="term" value="F:copper ion binding"/>
    <property type="evidence" value="ECO:0000250"/>
    <property type="project" value="UniProtKB"/>
</dbReference>
<dbReference type="GO" id="GO:0051260">
    <property type="term" value="P:protein homooligomerization"/>
    <property type="evidence" value="ECO:0007669"/>
    <property type="project" value="InterPro"/>
</dbReference>
<dbReference type="FunFam" id="1.10.790.10:FF:000001">
    <property type="entry name" value="Major prion protein"/>
    <property type="match status" value="1"/>
</dbReference>
<dbReference type="Gene3D" id="1.10.790.10">
    <property type="entry name" value="Prion/Doppel protein, beta-ribbon domain"/>
    <property type="match status" value="1"/>
</dbReference>
<dbReference type="InterPro" id="IPR000817">
    <property type="entry name" value="Prion"/>
</dbReference>
<dbReference type="InterPro" id="IPR036924">
    <property type="entry name" value="Prion/Doppel_b-ribbon_dom_sf"/>
</dbReference>
<dbReference type="InterPro" id="IPR022416">
    <property type="entry name" value="Prion/Doppel_prot_b-ribbon_dom"/>
</dbReference>
<dbReference type="InterPro" id="IPR020949">
    <property type="entry name" value="Prion_copper_b_octapeptide"/>
</dbReference>
<dbReference type="InterPro" id="IPR025860">
    <property type="entry name" value="Prion_N"/>
</dbReference>
<dbReference type="PANTHER" id="PTHR15506">
    <property type="entry name" value="DOPPEL PRION"/>
    <property type="match status" value="1"/>
</dbReference>
<dbReference type="PANTHER" id="PTHR15506:SF2">
    <property type="entry name" value="MAJOR PRION PROTEIN"/>
    <property type="match status" value="1"/>
</dbReference>
<dbReference type="Pfam" id="PF00377">
    <property type="entry name" value="Prion"/>
    <property type="match status" value="1"/>
</dbReference>
<dbReference type="Pfam" id="PF11587">
    <property type="entry name" value="Prion_bPrPp"/>
    <property type="match status" value="1"/>
</dbReference>
<dbReference type="Pfam" id="PF03991">
    <property type="entry name" value="Prion_octapep"/>
    <property type="match status" value="2"/>
</dbReference>
<dbReference type="PRINTS" id="PR00341">
    <property type="entry name" value="PRION"/>
</dbReference>
<dbReference type="SMART" id="SM00157">
    <property type="entry name" value="PRP"/>
    <property type="match status" value="1"/>
</dbReference>
<dbReference type="SUPFAM" id="SSF54098">
    <property type="entry name" value="Prion-like"/>
    <property type="match status" value="1"/>
</dbReference>
<dbReference type="PROSITE" id="PS00291">
    <property type="entry name" value="PRION_1"/>
    <property type="match status" value="1"/>
</dbReference>
<dbReference type="PROSITE" id="PS00706">
    <property type="entry name" value="PRION_2"/>
    <property type="match status" value="1"/>
</dbReference>
<reference key="1">
    <citation type="submission" date="1993-08" db="EMBL/GenBank/DDBJ databases">
        <authorList>
            <person name="Martin T.C."/>
            <person name="Hughes S.L."/>
            <person name="Hughes K.J."/>
            <person name="Dawson M."/>
        </authorList>
    </citation>
    <scope>NUCLEOTIDE SEQUENCE [GENOMIC DNA]</scope>
    <source>
        <tissue>Brain</tissue>
    </source>
</reference>
<name>PRIO1_TRAST</name>